<sequence>MSEVLHINDADFESVVVNSDIPILLDFWAPWCGPCKMIAPVLDELAPEFAGKVKIVKMNVDDNQATPAQFGVRSIPTLLLIKNGQVVATQVGALPKTQLANFINQHI</sequence>
<proteinExistence type="inferred from homology"/>
<organism>
    <name type="scientific">Haemophilus influenzae (strain ATCC 51907 / DSM 11121 / KW20 / Rd)</name>
    <dbReference type="NCBI Taxonomy" id="71421"/>
    <lineage>
        <taxon>Bacteria</taxon>
        <taxon>Pseudomonadati</taxon>
        <taxon>Pseudomonadota</taxon>
        <taxon>Gammaproteobacteria</taxon>
        <taxon>Pasteurellales</taxon>
        <taxon>Pasteurellaceae</taxon>
        <taxon>Haemophilus</taxon>
    </lineage>
</organism>
<name>THIO_HAEIN</name>
<protein>
    <recommendedName>
        <fullName>Thioredoxin</fullName>
        <shortName>Trx</shortName>
    </recommendedName>
</protein>
<accession>P43785</accession>
<feature type="chain" id="PRO_0000120107" description="Thioredoxin">
    <location>
        <begin position="1"/>
        <end position="107"/>
    </location>
</feature>
<feature type="domain" description="Thioredoxin" evidence="2">
    <location>
        <begin position="2"/>
        <end position="107"/>
    </location>
</feature>
<feature type="disulfide bond" description="Redox-active" evidence="2">
    <location>
        <begin position="32"/>
        <end position="35"/>
    </location>
</feature>
<reference key="1">
    <citation type="journal article" date="1995" name="Science">
        <title>Whole-genome random sequencing and assembly of Haemophilus influenzae Rd.</title>
        <authorList>
            <person name="Fleischmann R.D."/>
            <person name="Adams M.D."/>
            <person name="White O."/>
            <person name="Clayton R.A."/>
            <person name="Kirkness E.F."/>
            <person name="Kerlavage A.R."/>
            <person name="Bult C.J."/>
            <person name="Tomb J.-F."/>
            <person name="Dougherty B.A."/>
            <person name="Merrick J.M."/>
            <person name="McKenney K."/>
            <person name="Sutton G.G."/>
            <person name="FitzHugh W."/>
            <person name="Fields C.A."/>
            <person name="Gocayne J.D."/>
            <person name="Scott J.D."/>
            <person name="Shirley R."/>
            <person name="Liu L.-I."/>
            <person name="Glodek A."/>
            <person name="Kelley J.M."/>
            <person name="Weidman J.F."/>
            <person name="Phillips C.A."/>
            <person name="Spriggs T."/>
            <person name="Hedblom E."/>
            <person name="Cotton M.D."/>
            <person name="Utterback T.R."/>
            <person name="Hanna M.C."/>
            <person name="Nguyen D.T."/>
            <person name="Saudek D.M."/>
            <person name="Brandon R.C."/>
            <person name="Fine L.D."/>
            <person name="Fritchman J.L."/>
            <person name="Fuhrmann J.L."/>
            <person name="Geoghagen N.S.M."/>
            <person name="Gnehm C.L."/>
            <person name="McDonald L.A."/>
            <person name="Small K.V."/>
            <person name="Fraser C.M."/>
            <person name="Smith H.O."/>
            <person name="Venter J.C."/>
        </authorList>
    </citation>
    <scope>NUCLEOTIDE SEQUENCE [LARGE SCALE GENOMIC DNA]</scope>
    <source>
        <strain>ATCC 51907 / DSM 11121 / KW20 / Rd</strain>
    </source>
</reference>
<keyword id="KW-1015">Disulfide bond</keyword>
<keyword id="KW-0249">Electron transport</keyword>
<keyword id="KW-0676">Redox-active center</keyword>
<keyword id="KW-1185">Reference proteome</keyword>
<keyword id="KW-0813">Transport</keyword>
<gene>
    <name type="primary">trxA</name>
    <name type="synonym">trxM</name>
    <name type="ordered locus">HI_0084</name>
</gene>
<dbReference type="EMBL" id="L42023">
    <property type="protein sequence ID" value="AAC21757.1"/>
    <property type="molecule type" value="Genomic_DNA"/>
</dbReference>
<dbReference type="PIR" id="E64047">
    <property type="entry name" value="E64047"/>
</dbReference>
<dbReference type="RefSeq" id="NP_438257.1">
    <property type="nucleotide sequence ID" value="NC_000907.1"/>
</dbReference>
<dbReference type="SMR" id="P43785"/>
<dbReference type="STRING" id="71421.HI_0084"/>
<dbReference type="EnsemblBacteria" id="AAC21757">
    <property type="protein sequence ID" value="AAC21757"/>
    <property type="gene ID" value="HI_0084"/>
</dbReference>
<dbReference type="KEGG" id="hin:HI_0084"/>
<dbReference type="PATRIC" id="fig|71421.8.peg.85"/>
<dbReference type="eggNOG" id="COG3118">
    <property type="taxonomic scope" value="Bacteria"/>
</dbReference>
<dbReference type="HOGENOM" id="CLU_090389_10_2_6"/>
<dbReference type="OrthoDB" id="9790390at2"/>
<dbReference type="PhylomeDB" id="P43785"/>
<dbReference type="BioCyc" id="HINF71421:G1GJ1-85-MONOMER"/>
<dbReference type="Proteomes" id="UP000000579">
    <property type="component" value="Chromosome"/>
</dbReference>
<dbReference type="GO" id="GO:0005737">
    <property type="term" value="C:cytoplasm"/>
    <property type="evidence" value="ECO:0000318"/>
    <property type="project" value="GO_Central"/>
</dbReference>
<dbReference type="GO" id="GO:0005829">
    <property type="term" value="C:cytosol"/>
    <property type="evidence" value="ECO:0000318"/>
    <property type="project" value="GO_Central"/>
</dbReference>
<dbReference type="GO" id="GO:0015035">
    <property type="term" value="F:protein-disulfide reductase activity"/>
    <property type="evidence" value="ECO:0000318"/>
    <property type="project" value="GO_Central"/>
</dbReference>
<dbReference type="GO" id="GO:0045454">
    <property type="term" value="P:cell redox homeostasis"/>
    <property type="evidence" value="ECO:0000318"/>
    <property type="project" value="GO_Central"/>
</dbReference>
<dbReference type="CDD" id="cd02947">
    <property type="entry name" value="TRX_family"/>
    <property type="match status" value="1"/>
</dbReference>
<dbReference type="FunFam" id="3.40.30.10:FF:000001">
    <property type="entry name" value="Thioredoxin"/>
    <property type="match status" value="1"/>
</dbReference>
<dbReference type="Gene3D" id="3.40.30.10">
    <property type="entry name" value="Glutaredoxin"/>
    <property type="match status" value="1"/>
</dbReference>
<dbReference type="InterPro" id="IPR005746">
    <property type="entry name" value="Thioredoxin"/>
</dbReference>
<dbReference type="InterPro" id="IPR036249">
    <property type="entry name" value="Thioredoxin-like_sf"/>
</dbReference>
<dbReference type="InterPro" id="IPR017937">
    <property type="entry name" value="Thioredoxin_CS"/>
</dbReference>
<dbReference type="InterPro" id="IPR013766">
    <property type="entry name" value="Thioredoxin_domain"/>
</dbReference>
<dbReference type="NCBIfam" id="TIGR01068">
    <property type="entry name" value="thioredoxin"/>
    <property type="match status" value="1"/>
</dbReference>
<dbReference type="PANTHER" id="PTHR45663">
    <property type="entry name" value="GEO12009P1"/>
    <property type="match status" value="1"/>
</dbReference>
<dbReference type="PANTHER" id="PTHR45663:SF11">
    <property type="entry name" value="GEO12009P1"/>
    <property type="match status" value="1"/>
</dbReference>
<dbReference type="Pfam" id="PF00085">
    <property type="entry name" value="Thioredoxin"/>
    <property type="match status" value="1"/>
</dbReference>
<dbReference type="PIRSF" id="PIRSF000077">
    <property type="entry name" value="Thioredoxin"/>
    <property type="match status" value="1"/>
</dbReference>
<dbReference type="PRINTS" id="PR00421">
    <property type="entry name" value="THIOREDOXIN"/>
</dbReference>
<dbReference type="SUPFAM" id="SSF52833">
    <property type="entry name" value="Thioredoxin-like"/>
    <property type="match status" value="1"/>
</dbReference>
<dbReference type="PROSITE" id="PS00194">
    <property type="entry name" value="THIOREDOXIN_1"/>
    <property type="match status" value="1"/>
</dbReference>
<dbReference type="PROSITE" id="PS51352">
    <property type="entry name" value="THIOREDOXIN_2"/>
    <property type="match status" value="1"/>
</dbReference>
<comment type="function">
    <text evidence="1">Participates in various redox reactions through the reversible oxidation of its active center dithiol to a disulfide and catalyzes dithiol-disulfide exchange reactions.</text>
</comment>
<comment type="similarity">
    <text evidence="3">Belongs to the thioredoxin family.</text>
</comment>
<evidence type="ECO:0000250" key="1"/>
<evidence type="ECO:0000255" key="2">
    <source>
        <dbReference type="PROSITE-ProRule" id="PRU00691"/>
    </source>
</evidence>
<evidence type="ECO:0000305" key="3"/>